<reference key="1">
    <citation type="journal article" date="2009" name="PLoS ONE">
        <title>Salmonella paratyphi C: genetic divergence from Salmonella choleraesuis and pathogenic convergence with Salmonella typhi.</title>
        <authorList>
            <person name="Liu W.-Q."/>
            <person name="Feng Y."/>
            <person name="Wang Y."/>
            <person name="Zou Q.-H."/>
            <person name="Chen F."/>
            <person name="Guo J.-T."/>
            <person name="Peng Y.-H."/>
            <person name="Jin Y."/>
            <person name="Li Y.-G."/>
            <person name="Hu S.-N."/>
            <person name="Johnston R.N."/>
            <person name="Liu G.-R."/>
            <person name="Liu S.-L."/>
        </authorList>
    </citation>
    <scope>NUCLEOTIDE SEQUENCE [LARGE SCALE GENOMIC DNA]</scope>
    <source>
        <strain>RKS4594</strain>
    </source>
</reference>
<organism>
    <name type="scientific">Salmonella paratyphi C (strain RKS4594)</name>
    <dbReference type="NCBI Taxonomy" id="476213"/>
    <lineage>
        <taxon>Bacteria</taxon>
        <taxon>Pseudomonadati</taxon>
        <taxon>Pseudomonadota</taxon>
        <taxon>Gammaproteobacteria</taxon>
        <taxon>Enterobacterales</taxon>
        <taxon>Enterobacteriaceae</taxon>
        <taxon>Salmonella</taxon>
    </lineage>
</organism>
<proteinExistence type="inferred from homology"/>
<sequence>MVKVYAPASSANMSVGFDVLGAAVTPVDGTLLGDVVSVEAADHFRLHNLGRFADKLPPEPRENIVYQCWERFCQALGKTIPVAMTLEKNMPIGSGLGSSACSVVAALVAMNEHCGKPLNDTRLLALMGELEGRISGSIHYDNVAPCFLGGMQLMIEENGIISQQVPGFDEWLWVLAYPGIKVSTAEARAILPAQYRRQDCIAHGRHLAGFIHACYSRQPQLAAALMKDVIAEPYRARLLPGFSQARQAVSEIGALASGISGSGPTLFALCDKPETAQRVADWLSKHYLQNQEGFVHICRLDTAGARVVG</sequence>
<protein>
    <recommendedName>
        <fullName evidence="1">Homoserine kinase</fullName>
        <shortName evidence="1">HK</shortName>
        <shortName evidence="1">HSK</shortName>
        <ecNumber evidence="1">2.7.1.39</ecNumber>
    </recommendedName>
</protein>
<comment type="function">
    <text evidence="1">Catalyzes the ATP-dependent phosphorylation of L-homoserine to L-homoserine phosphate.</text>
</comment>
<comment type="catalytic activity">
    <reaction evidence="1">
        <text>L-homoserine + ATP = O-phospho-L-homoserine + ADP + H(+)</text>
        <dbReference type="Rhea" id="RHEA:13985"/>
        <dbReference type="ChEBI" id="CHEBI:15378"/>
        <dbReference type="ChEBI" id="CHEBI:30616"/>
        <dbReference type="ChEBI" id="CHEBI:57476"/>
        <dbReference type="ChEBI" id="CHEBI:57590"/>
        <dbReference type="ChEBI" id="CHEBI:456216"/>
        <dbReference type="EC" id="2.7.1.39"/>
    </reaction>
</comment>
<comment type="pathway">
    <text evidence="1">Amino-acid biosynthesis; L-threonine biosynthesis; L-threonine from L-aspartate: step 4/5.</text>
</comment>
<comment type="subcellular location">
    <subcellularLocation>
        <location evidence="1">Cytoplasm</location>
    </subcellularLocation>
</comment>
<comment type="similarity">
    <text evidence="1">Belongs to the GHMP kinase family. Homoserine kinase subfamily.</text>
</comment>
<dbReference type="EC" id="2.7.1.39" evidence="1"/>
<dbReference type="EMBL" id="CP000857">
    <property type="protein sequence ID" value="ACN44198.1"/>
    <property type="molecule type" value="Genomic_DNA"/>
</dbReference>
<dbReference type="RefSeq" id="WP_000241685.1">
    <property type="nucleotide sequence ID" value="NC_012125.1"/>
</dbReference>
<dbReference type="SMR" id="C0Q4E3"/>
<dbReference type="KEGG" id="sei:SPC_0003"/>
<dbReference type="HOGENOM" id="CLU_041243_1_1_6"/>
<dbReference type="UniPathway" id="UPA00050">
    <property type="reaction ID" value="UER00064"/>
</dbReference>
<dbReference type="Proteomes" id="UP000001599">
    <property type="component" value="Chromosome"/>
</dbReference>
<dbReference type="GO" id="GO:0005737">
    <property type="term" value="C:cytoplasm"/>
    <property type="evidence" value="ECO:0007669"/>
    <property type="project" value="UniProtKB-SubCell"/>
</dbReference>
<dbReference type="GO" id="GO:0005524">
    <property type="term" value="F:ATP binding"/>
    <property type="evidence" value="ECO:0007669"/>
    <property type="project" value="UniProtKB-UniRule"/>
</dbReference>
<dbReference type="GO" id="GO:0004413">
    <property type="term" value="F:homoserine kinase activity"/>
    <property type="evidence" value="ECO:0007669"/>
    <property type="project" value="UniProtKB-UniRule"/>
</dbReference>
<dbReference type="GO" id="GO:0009088">
    <property type="term" value="P:threonine biosynthetic process"/>
    <property type="evidence" value="ECO:0007669"/>
    <property type="project" value="UniProtKB-UniRule"/>
</dbReference>
<dbReference type="FunFam" id="3.30.230.10:FF:000020">
    <property type="entry name" value="Homoserine kinase"/>
    <property type="match status" value="1"/>
</dbReference>
<dbReference type="FunFam" id="3.30.70.890:FF:000002">
    <property type="entry name" value="Homoserine kinase"/>
    <property type="match status" value="1"/>
</dbReference>
<dbReference type="Gene3D" id="3.30.230.10">
    <property type="match status" value="1"/>
</dbReference>
<dbReference type="Gene3D" id="3.30.70.890">
    <property type="entry name" value="GHMP kinase, C-terminal domain"/>
    <property type="match status" value="1"/>
</dbReference>
<dbReference type="HAMAP" id="MF_00384">
    <property type="entry name" value="Homoser_kinase"/>
    <property type="match status" value="1"/>
</dbReference>
<dbReference type="InterPro" id="IPR013750">
    <property type="entry name" value="GHMP_kinase_C_dom"/>
</dbReference>
<dbReference type="InterPro" id="IPR036554">
    <property type="entry name" value="GHMP_kinase_C_sf"/>
</dbReference>
<dbReference type="InterPro" id="IPR006204">
    <property type="entry name" value="GHMP_kinase_N_dom"/>
</dbReference>
<dbReference type="InterPro" id="IPR006203">
    <property type="entry name" value="GHMP_knse_ATP-bd_CS"/>
</dbReference>
<dbReference type="InterPro" id="IPR000870">
    <property type="entry name" value="Homoserine_kinase"/>
</dbReference>
<dbReference type="InterPro" id="IPR020568">
    <property type="entry name" value="Ribosomal_Su5_D2-typ_SF"/>
</dbReference>
<dbReference type="InterPro" id="IPR014721">
    <property type="entry name" value="Ribsml_uS5_D2-typ_fold_subgr"/>
</dbReference>
<dbReference type="NCBIfam" id="NF002288">
    <property type="entry name" value="PRK01212.1-4"/>
    <property type="match status" value="1"/>
</dbReference>
<dbReference type="NCBIfam" id="TIGR00191">
    <property type="entry name" value="thrB"/>
    <property type="match status" value="1"/>
</dbReference>
<dbReference type="PANTHER" id="PTHR20861:SF1">
    <property type="entry name" value="HOMOSERINE KINASE"/>
    <property type="match status" value="1"/>
</dbReference>
<dbReference type="PANTHER" id="PTHR20861">
    <property type="entry name" value="HOMOSERINE/4-DIPHOSPHOCYTIDYL-2-C-METHYL-D-ERYTHRITOL KINASE"/>
    <property type="match status" value="1"/>
</dbReference>
<dbReference type="Pfam" id="PF08544">
    <property type="entry name" value="GHMP_kinases_C"/>
    <property type="match status" value="1"/>
</dbReference>
<dbReference type="Pfam" id="PF00288">
    <property type="entry name" value="GHMP_kinases_N"/>
    <property type="match status" value="1"/>
</dbReference>
<dbReference type="PIRSF" id="PIRSF000676">
    <property type="entry name" value="Homoser_kin"/>
    <property type="match status" value="1"/>
</dbReference>
<dbReference type="PRINTS" id="PR00958">
    <property type="entry name" value="HOMSERKINASE"/>
</dbReference>
<dbReference type="SUPFAM" id="SSF55060">
    <property type="entry name" value="GHMP Kinase, C-terminal domain"/>
    <property type="match status" value="1"/>
</dbReference>
<dbReference type="SUPFAM" id="SSF54211">
    <property type="entry name" value="Ribosomal protein S5 domain 2-like"/>
    <property type="match status" value="1"/>
</dbReference>
<dbReference type="PROSITE" id="PS00627">
    <property type="entry name" value="GHMP_KINASES_ATP"/>
    <property type="match status" value="1"/>
</dbReference>
<evidence type="ECO:0000255" key="1">
    <source>
        <dbReference type="HAMAP-Rule" id="MF_00384"/>
    </source>
</evidence>
<name>KHSE_SALPC</name>
<accession>C0Q4E3</accession>
<gene>
    <name evidence="1" type="primary">thrB</name>
    <name type="ordered locus">SPC_0003</name>
</gene>
<keyword id="KW-0028">Amino-acid biosynthesis</keyword>
<keyword id="KW-0067">ATP-binding</keyword>
<keyword id="KW-0963">Cytoplasm</keyword>
<keyword id="KW-0418">Kinase</keyword>
<keyword id="KW-0547">Nucleotide-binding</keyword>
<keyword id="KW-0791">Threonine biosynthesis</keyword>
<keyword id="KW-0808">Transferase</keyword>
<feature type="chain" id="PRO_1000134259" description="Homoserine kinase">
    <location>
        <begin position="1"/>
        <end position="309"/>
    </location>
</feature>
<feature type="binding site" evidence="1">
    <location>
        <begin position="91"/>
        <end position="101"/>
    </location>
    <ligand>
        <name>ATP</name>
        <dbReference type="ChEBI" id="CHEBI:30616"/>
    </ligand>
</feature>